<protein>
    <recommendedName>
        <fullName evidence="1">ATP synthase subunit alpha</fullName>
        <ecNumber evidence="1">7.1.2.2</ecNumber>
    </recommendedName>
    <alternativeName>
        <fullName evidence="1">ATP synthase F1 sector subunit alpha</fullName>
    </alternativeName>
    <alternativeName>
        <fullName evidence="1">F-ATPase subunit alpha</fullName>
    </alternativeName>
</protein>
<dbReference type="EC" id="7.1.2.2" evidence="1"/>
<dbReference type="EMBL" id="U64318">
    <property type="protein sequence ID" value="AAB51464.1"/>
    <property type="molecule type" value="Genomic_DNA"/>
</dbReference>
<dbReference type="EMBL" id="CP000232">
    <property type="protein sequence ID" value="ABC20662.1"/>
    <property type="molecule type" value="Genomic_DNA"/>
</dbReference>
<dbReference type="RefSeq" id="YP_431205.1">
    <property type="nucleotide sequence ID" value="NC_007644.1"/>
</dbReference>
<dbReference type="SMR" id="Q2RFX7"/>
<dbReference type="STRING" id="264732.Moth_2380"/>
<dbReference type="EnsemblBacteria" id="ABC20662">
    <property type="protein sequence ID" value="ABC20662"/>
    <property type="gene ID" value="Moth_2380"/>
</dbReference>
<dbReference type="KEGG" id="mta:Moth_2380"/>
<dbReference type="PATRIC" id="fig|264732.11.peg.2593"/>
<dbReference type="eggNOG" id="COG0056">
    <property type="taxonomic scope" value="Bacteria"/>
</dbReference>
<dbReference type="HOGENOM" id="CLU_010091_2_1_9"/>
<dbReference type="OrthoDB" id="9803053at2"/>
<dbReference type="GO" id="GO:0005886">
    <property type="term" value="C:plasma membrane"/>
    <property type="evidence" value="ECO:0007669"/>
    <property type="project" value="UniProtKB-SubCell"/>
</dbReference>
<dbReference type="GO" id="GO:0045259">
    <property type="term" value="C:proton-transporting ATP synthase complex"/>
    <property type="evidence" value="ECO:0007669"/>
    <property type="project" value="UniProtKB-KW"/>
</dbReference>
<dbReference type="GO" id="GO:0043531">
    <property type="term" value="F:ADP binding"/>
    <property type="evidence" value="ECO:0007669"/>
    <property type="project" value="TreeGrafter"/>
</dbReference>
<dbReference type="GO" id="GO:0005524">
    <property type="term" value="F:ATP binding"/>
    <property type="evidence" value="ECO:0007669"/>
    <property type="project" value="UniProtKB-UniRule"/>
</dbReference>
<dbReference type="GO" id="GO:0046933">
    <property type="term" value="F:proton-transporting ATP synthase activity, rotational mechanism"/>
    <property type="evidence" value="ECO:0007669"/>
    <property type="project" value="UniProtKB-UniRule"/>
</dbReference>
<dbReference type="CDD" id="cd18113">
    <property type="entry name" value="ATP-synt_F1_alpha_C"/>
    <property type="match status" value="1"/>
</dbReference>
<dbReference type="CDD" id="cd18116">
    <property type="entry name" value="ATP-synt_F1_alpha_N"/>
    <property type="match status" value="1"/>
</dbReference>
<dbReference type="CDD" id="cd01132">
    <property type="entry name" value="F1-ATPase_alpha_CD"/>
    <property type="match status" value="1"/>
</dbReference>
<dbReference type="FunFam" id="1.20.150.20:FF:000001">
    <property type="entry name" value="ATP synthase subunit alpha"/>
    <property type="match status" value="1"/>
</dbReference>
<dbReference type="FunFam" id="2.40.30.20:FF:000001">
    <property type="entry name" value="ATP synthase subunit alpha"/>
    <property type="match status" value="1"/>
</dbReference>
<dbReference type="FunFam" id="3.40.50.300:FF:000002">
    <property type="entry name" value="ATP synthase subunit alpha"/>
    <property type="match status" value="1"/>
</dbReference>
<dbReference type="Gene3D" id="2.40.30.20">
    <property type="match status" value="1"/>
</dbReference>
<dbReference type="Gene3D" id="1.20.150.20">
    <property type="entry name" value="ATP synthase alpha/beta chain, C-terminal domain"/>
    <property type="match status" value="1"/>
</dbReference>
<dbReference type="Gene3D" id="3.40.50.300">
    <property type="entry name" value="P-loop containing nucleotide triphosphate hydrolases"/>
    <property type="match status" value="1"/>
</dbReference>
<dbReference type="HAMAP" id="MF_01346">
    <property type="entry name" value="ATP_synth_alpha_bact"/>
    <property type="match status" value="1"/>
</dbReference>
<dbReference type="InterPro" id="IPR023366">
    <property type="entry name" value="ATP_synth_asu-like_sf"/>
</dbReference>
<dbReference type="InterPro" id="IPR000793">
    <property type="entry name" value="ATP_synth_asu_C"/>
</dbReference>
<dbReference type="InterPro" id="IPR038376">
    <property type="entry name" value="ATP_synth_asu_C_sf"/>
</dbReference>
<dbReference type="InterPro" id="IPR033732">
    <property type="entry name" value="ATP_synth_F1_a_nt-bd_dom"/>
</dbReference>
<dbReference type="InterPro" id="IPR005294">
    <property type="entry name" value="ATP_synth_F1_asu"/>
</dbReference>
<dbReference type="InterPro" id="IPR020003">
    <property type="entry name" value="ATPase_a/bsu_AS"/>
</dbReference>
<dbReference type="InterPro" id="IPR004100">
    <property type="entry name" value="ATPase_F1/V1/A1_a/bsu_N"/>
</dbReference>
<dbReference type="InterPro" id="IPR036121">
    <property type="entry name" value="ATPase_F1/V1/A1_a/bsu_N_sf"/>
</dbReference>
<dbReference type="InterPro" id="IPR000194">
    <property type="entry name" value="ATPase_F1/V1/A1_a/bsu_nucl-bd"/>
</dbReference>
<dbReference type="InterPro" id="IPR027417">
    <property type="entry name" value="P-loop_NTPase"/>
</dbReference>
<dbReference type="NCBIfam" id="TIGR00962">
    <property type="entry name" value="atpA"/>
    <property type="match status" value="1"/>
</dbReference>
<dbReference type="NCBIfam" id="NF009884">
    <property type="entry name" value="PRK13343.1"/>
    <property type="match status" value="1"/>
</dbReference>
<dbReference type="PANTHER" id="PTHR48082">
    <property type="entry name" value="ATP SYNTHASE SUBUNIT ALPHA, MITOCHONDRIAL"/>
    <property type="match status" value="1"/>
</dbReference>
<dbReference type="PANTHER" id="PTHR48082:SF2">
    <property type="entry name" value="ATP SYNTHASE SUBUNIT ALPHA, MITOCHONDRIAL"/>
    <property type="match status" value="1"/>
</dbReference>
<dbReference type="Pfam" id="PF00006">
    <property type="entry name" value="ATP-synt_ab"/>
    <property type="match status" value="1"/>
</dbReference>
<dbReference type="Pfam" id="PF00306">
    <property type="entry name" value="ATP-synt_ab_C"/>
    <property type="match status" value="1"/>
</dbReference>
<dbReference type="Pfam" id="PF02874">
    <property type="entry name" value="ATP-synt_ab_N"/>
    <property type="match status" value="1"/>
</dbReference>
<dbReference type="PIRSF" id="PIRSF039088">
    <property type="entry name" value="F_ATPase_subunit_alpha"/>
    <property type="match status" value="1"/>
</dbReference>
<dbReference type="SUPFAM" id="SSF47917">
    <property type="entry name" value="C-terminal domain of alpha and beta subunits of F1 ATP synthase"/>
    <property type="match status" value="1"/>
</dbReference>
<dbReference type="SUPFAM" id="SSF50615">
    <property type="entry name" value="N-terminal domain of alpha and beta subunits of F1 ATP synthase"/>
    <property type="match status" value="1"/>
</dbReference>
<dbReference type="SUPFAM" id="SSF52540">
    <property type="entry name" value="P-loop containing nucleoside triphosphate hydrolases"/>
    <property type="match status" value="1"/>
</dbReference>
<dbReference type="PROSITE" id="PS00152">
    <property type="entry name" value="ATPASE_ALPHA_BETA"/>
    <property type="match status" value="1"/>
</dbReference>
<accession>Q2RFX7</accession>
<accession>O05431</accession>
<keyword id="KW-0066">ATP synthesis</keyword>
<keyword id="KW-0067">ATP-binding</keyword>
<keyword id="KW-1003">Cell membrane</keyword>
<keyword id="KW-0139">CF(1)</keyword>
<keyword id="KW-0375">Hydrogen ion transport</keyword>
<keyword id="KW-0406">Ion transport</keyword>
<keyword id="KW-0472">Membrane</keyword>
<keyword id="KW-0547">Nucleotide-binding</keyword>
<keyword id="KW-1278">Translocase</keyword>
<keyword id="KW-0813">Transport</keyword>
<organism>
    <name type="scientific">Moorella thermoacetica (strain ATCC 39073 / JCM 9320)</name>
    <dbReference type="NCBI Taxonomy" id="264732"/>
    <lineage>
        <taxon>Bacteria</taxon>
        <taxon>Bacillati</taxon>
        <taxon>Bacillota</taxon>
        <taxon>Clostridia</taxon>
        <taxon>Moorellales</taxon>
        <taxon>Moorellaceae</taxon>
        <taxon>Moorella</taxon>
    </lineage>
</organism>
<comment type="function">
    <text evidence="1">Produces ATP from ADP in the presence of a proton gradient across the membrane. The alpha chain is a regulatory subunit.</text>
</comment>
<comment type="catalytic activity">
    <reaction evidence="1">
        <text>ATP + H2O + 4 H(+)(in) = ADP + phosphate + 5 H(+)(out)</text>
        <dbReference type="Rhea" id="RHEA:57720"/>
        <dbReference type="ChEBI" id="CHEBI:15377"/>
        <dbReference type="ChEBI" id="CHEBI:15378"/>
        <dbReference type="ChEBI" id="CHEBI:30616"/>
        <dbReference type="ChEBI" id="CHEBI:43474"/>
        <dbReference type="ChEBI" id="CHEBI:456216"/>
        <dbReference type="EC" id="7.1.2.2"/>
    </reaction>
</comment>
<comment type="subunit">
    <text evidence="1 2">F-type ATPases have 2 components, CF(1) - the catalytic core - and CF(0) - the membrane proton channel. CF(1) has five subunits: alpha(3), beta(3), gamma(1), delta(1), epsilon(1). CF(0) has three main subunits: a(1), b(2) and c(9-12). The alpha and beta chains form an alternating ring which encloses part of the gamma chain. CF(1) is attached to CF(0) by a central stalk formed by the gamma and epsilon chains, while a peripheral stalk is formed by the delta and b chains (By similarity). In this bacterium the a and b subunits are transcribed but do not seem to be translated, thus the ATP synthase consists of the alpha, beta, gamma, delta, epsilon and c subunits.</text>
</comment>
<comment type="subcellular location">
    <subcellularLocation>
        <location>Cell membrane</location>
        <topology>Peripheral membrane protein</topology>
    </subcellularLocation>
</comment>
<comment type="similarity">
    <text evidence="1">Belongs to the ATPase alpha/beta chains family.</text>
</comment>
<name>ATPA_MOOTA</name>
<gene>
    <name evidence="1" type="primary">atpA</name>
    <name type="ordered locus">Moth_2380</name>
</gene>
<sequence length="507" mass="55639">MSIRPDEITSILKNQIEQYQLEVEMAEVGTVTQVGDGIARIYGLDRAMAGELLEFPGDIYGMVLNLEEDNVGAVILGPYTHIKEGDQVKRTGRIVEVPVGEALIGRVVNAMGQPIDGKGPIQTDKFRPVESPAPGVVYRQPVNTPLQTGLKAIDSMVPIGRGQRELIIGDRQTGKTAIAVDTIINQKGQNVICIYVAIGQKASTVAGVVQRLEEAGAMEYTIVVMATASEPAPMLYIAPYAGCTMGEYFMYEQHRDVLCVYDDLSKHAAAYRELSLLLRRPPGREAYPGDVFYLHSRLLERAARLNDSLGGGSLTALPVIETQAGDVSAYIPTNVISITDGQIFLESDLFYAGQRPAINVGLSVSRVGGAAQIKAMKQVAGRLRLDLAQYRELAAFAQFGSDLDKATQARLARGERMMEILKQDQYQPMPVEEQVVVLYAAVNGFLDDLPVARVRAFEKDFLRFLRNERPEVLAGIREKRQLDDNLQEQLKKSIEDFKGSFTAAGES</sequence>
<feature type="chain" id="PRO_0000238288" description="ATP synthase subunit alpha">
    <location>
        <begin position="1"/>
        <end position="507"/>
    </location>
</feature>
<feature type="binding site" evidence="1">
    <location>
        <begin position="169"/>
        <end position="176"/>
    </location>
    <ligand>
        <name>ATP</name>
        <dbReference type="ChEBI" id="CHEBI:30616"/>
    </ligand>
</feature>
<feature type="site" description="Required for activity" evidence="1">
    <location>
        <position position="363"/>
    </location>
</feature>
<feature type="sequence conflict" description="In Ref. 1; AAB51464." evidence="3" ref="1">
    <original>T</original>
    <variation>I</variation>
    <location>
        <position position="221"/>
    </location>
</feature>
<feature type="sequence conflict" description="In Ref. 1; AAB51464." evidence="3" ref="1">
    <original>A</original>
    <variation>P</variation>
    <location>
        <position position="286"/>
    </location>
</feature>
<feature type="sequence conflict" description="In Ref. 1; AAB51464." evidence="3" ref="1">
    <original>R</original>
    <variation>G</variation>
    <location>
        <position position="297"/>
    </location>
</feature>
<feature type="sequence conflict" description="In Ref. 1; AAB51464." evidence="3" ref="1">
    <original>A</original>
    <variation>P</variation>
    <location>
        <position position="302"/>
    </location>
</feature>
<feature type="sequence conflict" description="In Ref. 1; AAB51464." evidence="3" ref="1">
    <original>N</original>
    <variation>T</variation>
    <location>
        <position position="306"/>
    </location>
</feature>
<feature type="sequence conflict" description="In Ref. 1; AAB51464." evidence="3" ref="1">
    <original>G</original>
    <variation>A</variation>
    <location>
        <position position="361"/>
    </location>
</feature>
<feature type="sequence conflict" description="In Ref. 1; AAB51464." evidence="3" ref="1">
    <original>G</original>
    <variation>A</variation>
    <location>
        <position position="381"/>
    </location>
</feature>
<feature type="sequence conflict" description="In Ref. 1; AAB51464." evidence="3" ref="1">
    <original>G</original>
    <variation>A</variation>
    <location>
        <position position="414"/>
    </location>
</feature>
<feature type="sequence conflict" description="In Ref. 1; AAB51464." evidence="3" ref="1">
    <original>A</original>
    <variation>G</variation>
    <location>
        <position position="452"/>
    </location>
</feature>
<reference key="1">
    <citation type="journal article" date="1997" name="J. Bacteriol.">
        <title>Composition and primary structure of the F1F0 ATP synthase from the obligately anaerobic bacterium Clostridium thermoaceticum.</title>
        <authorList>
            <person name="Das A."/>
            <person name="Ljungdahl L.G."/>
        </authorList>
    </citation>
    <scope>NUCLEOTIDE SEQUENCE [GENOMIC DNA]</scope>
    <scope>SUBUNIT</scope>
    <scope>OPERON STRUCTURE</scope>
</reference>
<reference key="2">
    <citation type="journal article" date="2008" name="Environ. Microbiol.">
        <title>The complete genome sequence of Moorella thermoacetica (f. Clostridium thermoaceticum).</title>
        <authorList>
            <person name="Pierce E."/>
            <person name="Xie G."/>
            <person name="Barabote R.D."/>
            <person name="Saunders E."/>
            <person name="Han C.S."/>
            <person name="Detter J.C."/>
            <person name="Richardson P."/>
            <person name="Brettin T.S."/>
            <person name="Das A."/>
            <person name="Ljungdahl L.G."/>
            <person name="Ragsdale S.W."/>
        </authorList>
    </citation>
    <scope>NUCLEOTIDE SEQUENCE [LARGE SCALE GENOMIC DNA]</scope>
    <source>
        <strain>ATCC 39073 / JCM 9320</strain>
    </source>
</reference>
<evidence type="ECO:0000255" key="1">
    <source>
        <dbReference type="HAMAP-Rule" id="MF_01346"/>
    </source>
</evidence>
<evidence type="ECO:0000269" key="2">
    <source>
    </source>
</evidence>
<evidence type="ECO:0000305" key="3"/>
<proteinExistence type="evidence at protein level"/>